<gene>
    <name evidence="1" type="primary">serS</name>
    <name type="ordered locus">ABO_1294</name>
</gene>
<evidence type="ECO:0000255" key="1">
    <source>
        <dbReference type="HAMAP-Rule" id="MF_00176"/>
    </source>
</evidence>
<organism>
    <name type="scientific">Alcanivorax borkumensis (strain ATCC 700651 / DSM 11573 / NCIMB 13689 / SK2)</name>
    <dbReference type="NCBI Taxonomy" id="393595"/>
    <lineage>
        <taxon>Bacteria</taxon>
        <taxon>Pseudomonadati</taxon>
        <taxon>Pseudomonadota</taxon>
        <taxon>Gammaproteobacteria</taxon>
        <taxon>Oceanospirillales</taxon>
        <taxon>Alcanivoracaceae</taxon>
        <taxon>Alcanivorax</taxon>
    </lineage>
</organism>
<sequence length="429" mass="47944">MLDIRALRQDGEAIKAALSKRGYTLDLEEFAALDAKRKQADMRSQELQADRKKASKQVGELIKSGMAVDEAKAQVADALQTIDTELDKEVASAKAIQDEIREYLMGIPNVPQEAVPAGNDEDDNVEVRRWGTPKTLPFEPKDHVDIGEALEGGLDFERAAKLSGARFAVMSGGLARMHRALIDFMLDIHSDEHGYQEVYVPFLVGPEALRGTGQLPKFAEDLFKIEGERELYLIPTAEVPVTNLAADEILEANTMPRRYTCHTPCFRSEAGSHGRDTRGMIRQHQFEKVELVQMVRPEESDAALEALTGHAEAILQKLDLPYRVVILCGGDLGFSSSKTYDIEVWLPSQQCYREISSCSNFRDYQSRRMQARWRNPETGKPELVHTLNGSALAVGRTLVAILENYQNDDGSVTVPEALRPYMRGLERLK</sequence>
<reference key="1">
    <citation type="journal article" date="2006" name="Nat. Biotechnol.">
        <title>Genome sequence of the ubiquitous hydrocarbon-degrading marine bacterium Alcanivorax borkumensis.</title>
        <authorList>
            <person name="Schneiker S."/>
            <person name="Martins dos Santos V.A.P."/>
            <person name="Bartels D."/>
            <person name="Bekel T."/>
            <person name="Brecht M."/>
            <person name="Buhrmester J."/>
            <person name="Chernikova T.N."/>
            <person name="Denaro R."/>
            <person name="Ferrer M."/>
            <person name="Gertler C."/>
            <person name="Goesmann A."/>
            <person name="Golyshina O.V."/>
            <person name="Kaminski F."/>
            <person name="Khachane A.N."/>
            <person name="Lang S."/>
            <person name="Linke B."/>
            <person name="McHardy A.C."/>
            <person name="Meyer F."/>
            <person name="Nechitaylo T."/>
            <person name="Puehler A."/>
            <person name="Regenhardt D."/>
            <person name="Rupp O."/>
            <person name="Sabirova J.S."/>
            <person name="Selbitschka W."/>
            <person name="Yakimov M.M."/>
            <person name="Timmis K.N."/>
            <person name="Vorhoelter F.-J."/>
            <person name="Weidner S."/>
            <person name="Kaiser O."/>
            <person name="Golyshin P.N."/>
        </authorList>
    </citation>
    <scope>NUCLEOTIDE SEQUENCE [LARGE SCALE GENOMIC DNA]</scope>
    <source>
        <strain>ATCC 700651 / DSM 11573 / NCIMB 13689 / SK2</strain>
    </source>
</reference>
<protein>
    <recommendedName>
        <fullName evidence="1">Serine--tRNA ligase</fullName>
        <ecNumber evidence="1">6.1.1.11</ecNumber>
    </recommendedName>
    <alternativeName>
        <fullName evidence="1">Seryl-tRNA synthetase</fullName>
        <shortName evidence="1">SerRS</shortName>
    </alternativeName>
    <alternativeName>
        <fullName evidence="1">Seryl-tRNA(Ser/Sec) synthetase</fullName>
    </alternativeName>
</protein>
<feature type="chain" id="PRO_1000019606" description="Serine--tRNA ligase">
    <location>
        <begin position="1"/>
        <end position="429"/>
    </location>
</feature>
<feature type="binding site" evidence="1">
    <location>
        <begin position="236"/>
        <end position="238"/>
    </location>
    <ligand>
        <name>L-serine</name>
        <dbReference type="ChEBI" id="CHEBI:33384"/>
    </ligand>
</feature>
<feature type="binding site" evidence="1">
    <location>
        <begin position="267"/>
        <end position="269"/>
    </location>
    <ligand>
        <name>ATP</name>
        <dbReference type="ChEBI" id="CHEBI:30616"/>
    </ligand>
</feature>
<feature type="binding site" evidence="1">
    <location>
        <position position="290"/>
    </location>
    <ligand>
        <name>L-serine</name>
        <dbReference type="ChEBI" id="CHEBI:33384"/>
    </ligand>
</feature>
<feature type="binding site" evidence="1">
    <location>
        <begin position="354"/>
        <end position="357"/>
    </location>
    <ligand>
        <name>ATP</name>
        <dbReference type="ChEBI" id="CHEBI:30616"/>
    </ligand>
</feature>
<feature type="binding site" evidence="1">
    <location>
        <position position="390"/>
    </location>
    <ligand>
        <name>L-serine</name>
        <dbReference type="ChEBI" id="CHEBI:33384"/>
    </ligand>
</feature>
<comment type="function">
    <text evidence="1">Catalyzes the attachment of serine to tRNA(Ser). Is also able to aminoacylate tRNA(Sec) with serine, to form the misacylated tRNA L-seryl-tRNA(Sec), which will be further converted into selenocysteinyl-tRNA(Sec).</text>
</comment>
<comment type="catalytic activity">
    <reaction evidence="1">
        <text>tRNA(Ser) + L-serine + ATP = L-seryl-tRNA(Ser) + AMP + diphosphate + H(+)</text>
        <dbReference type="Rhea" id="RHEA:12292"/>
        <dbReference type="Rhea" id="RHEA-COMP:9669"/>
        <dbReference type="Rhea" id="RHEA-COMP:9703"/>
        <dbReference type="ChEBI" id="CHEBI:15378"/>
        <dbReference type="ChEBI" id="CHEBI:30616"/>
        <dbReference type="ChEBI" id="CHEBI:33019"/>
        <dbReference type="ChEBI" id="CHEBI:33384"/>
        <dbReference type="ChEBI" id="CHEBI:78442"/>
        <dbReference type="ChEBI" id="CHEBI:78533"/>
        <dbReference type="ChEBI" id="CHEBI:456215"/>
        <dbReference type="EC" id="6.1.1.11"/>
    </reaction>
</comment>
<comment type="catalytic activity">
    <reaction evidence="1">
        <text>tRNA(Sec) + L-serine + ATP = L-seryl-tRNA(Sec) + AMP + diphosphate + H(+)</text>
        <dbReference type="Rhea" id="RHEA:42580"/>
        <dbReference type="Rhea" id="RHEA-COMP:9742"/>
        <dbReference type="Rhea" id="RHEA-COMP:10128"/>
        <dbReference type="ChEBI" id="CHEBI:15378"/>
        <dbReference type="ChEBI" id="CHEBI:30616"/>
        <dbReference type="ChEBI" id="CHEBI:33019"/>
        <dbReference type="ChEBI" id="CHEBI:33384"/>
        <dbReference type="ChEBI" id="CHEBI:78442"/>
        <dbReference type="ChEBI" id="CHEBI:78533"/>
        <dbReference type="ChEBI" id="CHEBI:456215"/>
        <dbReference type="EC" id="6.1.1.11"/>
    </reaction>
</comment>
<comment type="pathway">
    <text evidence="1">Aminoacyl-tRNA biosynthesis; selenocysteinyl-tRNA(Sec) biosynthesis; L-seryl-tRNA(Sec) from L-serine and tRNA(Sec): step 1/1.</text>
</comment>
<comment type="subunit">
    <text evidence="1">Homodimer. The tRNA molecule binds across the dimer.</text>
</comment>
<comment type="subcellular location">
    <subcellularLocation>
        <location evidence="1">Cytoplasm</location>
    </subcellularLocation>
</comment>
<comment type="domain">
    <text evidence="1">Consists of two distinct domains, a catalytic core and a N-terminal extension that is involved in tRNA binding.</text>
</comment>
<comment type="similarity">
    <text evidence="1">Belongs to the class-II aminoacyl-tRNA synthetase family. Type-1 seryl-tRNA synthetase subfamily.</text>
</comment>
<name>SYS_ALCBS</name>
<accession>Q0VQ06</accession>
<proteinExistence type="inferred from homology"/>
<keyword id="KW-0030">Aminoacyl-tRNA synthetase</keyword>
<keyword id="KW-0067">ATP-binding</keyword>
<keyword id="KW-0963">Cytoplasm</keyword>
<keyword id="KW-0436">Ligase</keyword>
<keyword id="KW-0547">Nucleotide-binding</keyword>
<keyword id="KW-0648">Protein biosynthesis</keyword>
<keyword id="KW-1185">Reference proteome</keyword>
<dbReference type="EC" id="6.1.1.11" evidence="1"/>
<dbReference type="EMBL" id="AM286690">
    <property type="protein sequence ID" value="CAL16742.1"/>
    <property type="molecule type" value="Genomic_DNA"/>
</dbReference>
<dbReference type="RefSeq" id="WP_011588576.1">
    <property type="nucleotide sequence ID" value="NC_008260.1"/>
</dbReference>
<dbReference type="SMR" id="Q0VQ06"/>
<dbReference type="STRING" id="393595.ABO_1294"/>
<dbReference type="KEGG" id="abo:ABO_1294"/>
<dbReference type="eggNOG" id="COG0172">
    <property type="taxonomic scope" value="Bacteria"/>
</dbReference>
<dbReference type="HOGENOM" id="CLU_023797_1_1_6"/>
<dbReference type="OrthoDB" id="9804647at2"/>
<dbReference type="UniPathway" id="UPA00906">
    <property type="reaction ID" value="UER00895"/>
</dbReference>
<dbReference type="Proteomes" id="UP000008871">
    <property type="component" value="Chromosome"/>
</dbReference>
<dbReference type="GO" id="GO:0005737">
    <property type="term" value="C:cytoplasm"/>
    <property type="evidence" value="ECO:0007669"/>
    <property type="project" value="UniProtKB-SubCell"/>
</dbReference>
<dbReference type="GO" id="GO:0005524">
    <property type="term" value="F:ATP binding"/>
    <property type="evidence" value="ECO:0007669"/>
    <property type="project" value="UniProtKB-UniRule"/>
</dbReference>
<dbReference type="GO" id="GO:0004828">
    <property type="term" value="F:serine-tRNA ligase activity"/>
    <property type="evidence" value="ECO:0007669"/>
    <property type="project" value="UniProtKB-UniRule"/>
</dbReference>
<dbReference type="GO" id="GO:0016260">
    <property type="term" value="P:selenocysteine biosynthetic process"/>
    <property type="evidence" value="ECO:0007669"/>
    <property type="project" value="UniProtKB-UniRule"/>
</dbReference>
<dbReference type="GO" id="GO:0006434">
    <property type="term" value="P:seryl-tRNA aminoacylation"/>
    <property type="evidence" value="ECO:0007669"/>
    <property type="project" value="UniProtKB-UniRule"/>
</dbReference>
<dbReference type="CDD" id="cd00770">
    <property type="entry name" value="SerRS_core"/>
    <property type="match status" value="1"/>
</dbReference>
<dbReference type="Gene3D" id="3.30.930.10">
    <property type="entry name" value="Bira Bifunctional Protein, Domain 2"/>
    <property type="match status" value="1"/>
</dbReference>
<dbReference type="Gene3D" id="1.10.287.40">
    <property type="entry name" value="Serine-tRNA synthetase, tRNA binding domain"/>
    <property type="match status" value="1"/>
</dbReference>
<dbReference type="HAMAP" id="MF_00176">
    <property type="entry name" value="Ser_tRNA_synth_type1"/>
    <property type="match status" value="1"/>
</dbReference>
<dbReference type="InterPro" id="IPR002314">
    <property type="entry name" value="aa-tRNA-synt_IIb"/>
</dbReference>
<dbReference type="InterPro" id="IPR006195">
    <property type="entry name" value="aa-tRNA-synth_II"/>
</dbReference>
<dbReference type="InterPro" id="IPR045864">
    <property type="entry name" value="aa-tRNA-synth_II/BPL/LPL"/>
</dbReference>
<dbReference type="InterPro" id="IPR002317">
    <property type="entry name" value="Ser-tRNA-ligase_type_1"/>
</dbReference>
<dbReference type="InterPro" id="IPR015866">
    <property type="entry name" value="Ser-tRNA-synth_1_N"/>
</dbReference>
<dbReference type="InterPro" id="IPR042103">
    <property type="entry name" value="SerRS_1_N_sf"/>
</dbReference>
<dbReference type="InterPro" id="IPR033729">
    <property type="entry name" value="SerRS_core"/>
</dbReference>
<dbReference type="InterPro" id="IPR010978">
    <property type="entry name" value="tRNA-bd_arm"/>
</dbReference>
<dbReference type="NCBIfam" id="TIGR00414">
    <property type="entry name" value="serS"/>
    <property type="match status" value="1"/>
</dbReference>
<dbReference type="PANTHER" id="PTHR43697:SF1">
    <property type="entry name" value="SERINE--TRNA LIGASE"/>
    <property type="match status" value="1"/>
</dbReference>
<dbReference type="PANTHER" id="PTHR43697">
    <property type="entry name" value="SERYL-TRNA SYNTHETASE"/>
    <property type="match status" value="1"/>
</dbReference>
<dbReference type="Pfam" id="PF02403">
    <property type="entry name" value="Seryl_tRNA_N"/>
    <property type="match status" value="1"/>
</dbReference>
<dbReference type="Pfam" id="PF00587">
    <property type="entry name" value="tRNA-synt_2b"/>
    <property type="match status" value="1"/>
</dbReference>
<dbReference type="PIRSF" id="PIRSF001529">
    <property type="entry name" value="Ser-tRNA-synth_IIa"/>
    <property type="match status" value="1"/>
</dbReference>
<dbReference type="PRINTS" id="PR00981">
    <property type="entry name" value="TRNASYNTHSER"/>
</dbReference>
<dbReference type="SUPFAM" id="SSF55681">
    <property type="entry name" value="Class II aaRS and biotin synthetases"/>
    <property type="match status" value="1"/>
</dbReference>
<dbReference type="SUPFAM" id="SSF46589">
    <property type="entry name" value="tRNA-binding arm"/>
    <property type="match status" value="1"/>
</dbReference>
<dbReference type="PROSITE" id="PS50862">
    <property type="entry name" value="AA_TRNA_LIGASE_II"/>
    <property type="match status" value="1"/>
</dbReference>